<feature type="chain" id="PRO_0000209946" description="MLO-like protein">
    <location>
        <begin position="1" status="less than"/>
        <end position="217" status="greater than"/>
    </location>
</feature>
<feature type="transmembrane region" description="Helical" evidence="2">
    <location>
        <begin position="35"/>
        <end position="55"/>
    </location>
</feature>
<feature type="transmembrane region" description="Helical" evidence="2">
    <location>
        <begin position="59"/>
        <end position="79"/>
    </location>
</feature>
<feature type="transmembrane region" description="Helical" evidence="2">
    <location>
        <begin position="119"/>
        <end position="139"/>
    </location>
</feature>
<feature type="non-terminal residue">
    <location>
        <position position="1"/>
    </location>
</feature>
<feature type="non-terminal residue">
    <location>
        <position position="217"/>
    </location>
</feature>
<accession>P81785</accession>
<name>MLOL_LINUS</name>
<reference key="1">
    <citation type="submission" date="1998-04" db="EMBL/GenBank/DDBJ databases">
        <authorList>
            <person name="McKay G.J."/>
        </authorList>
    </citation>
    <scope>NUCLEOTIDE SEQUENCE [MRNA]</scope>
    <source>
        <strain>cv. Antares</strain>
        <tissue>Cotyledon</tissue>
    </source>
</reference>
<organism>
    <name type="scientific">Linum usitatissimum</name>
    <name type="common">Flax</name>
    <name type="synonym">Linum humile</name>
    <dbReference type="NCBI Taxonomy" id="4006"/>
    <lineage>
        <taxon>Eukaryota</taxon>
        <taxon>Viridiplantae</taxon>
        <taxon>Streptophyta</taxon>
        <taxon>Embryophyta</taxon>
        <taxon>Tracheophyta</taxon>
        <taxon>Spermatophyta</taxon>
        <taxon>Magnoliopsida</taxon>
        <taxon>eudicotyledons</taxon>
        <taxon>Gunneridae</taxon>
        <taxon>Pentapetalae</taxon>
        <taxon>rosids</taxon>
        <taxon>fabids</taxon>
        <taxon>Malpighiales</taxon>
        <taxon>Linaceae</taxon>
        <taxon>Linum</taxon>
    </lineage>
</organism>
<dbReference type="EMBL" id="AJ005341">
    <property type="protein sequence ID" value="CAA06487.1"/>
    <property type="molecule type" value="mRNA"/>
</dbReference>
<dbReference type="GO" id="GO:0016020">
    <property type="term" value="C:membrane"/>
    <property type="evidence" value="ECO:0007669"/>
    <property type="project" value="UniProtKB-SubCell"/>
</dbReference>
<dbReference type="GO" id="GO:0006952">
    <property type="term" value="P:defense response"/>
    <property type="evidence" value="ECO:0007669"/>
    <property type="project" value="UniProtKB-KW"/>
</dbReference>
<dbReference type="InterPro" id="IPR004326">
    <property type="entry name" value="Mlo"/>
</dbReference>
<dbReference type="PANTHER" id="PTHR31942">
    <property type="entry name" value="MLO-LIKE PROTEIN 1"/>
    <property type="match status" value="1"/>
</dbReference>
<dbReference type="PANTHER" id="PTHR31942:SF84">
    <property type="entry name" value="MLO-LIKE PROTEIN 12"/>
    <property type="match status" value="1"/>
</dbReference>
<dbReference type="Pfam" id="PF03094">
    <property type="entry name" value="Mlo"/>
    <property type="match status" value="1"/>
</dbReference>
<protein>
    <recommendedName>
        <fullName>MLO-like protein</fullName>
    </recommendedName>
</protein>
<proteinExistence type="evidence at transcript level"/>
<keyword id="KW-0472">Membrane</keyword>
<keyword id="KW-0568">Pathogenesis-related protein</keyword>
<keyword id="KW-0611">Plant defense</keyword>
<keyword id="KW-0812">Transmembrane</keyword>
<keyword id="KW-1133">Transmembrane helix</keyword>
<comment type="function">
    <text evidence="1">May be involved in modulation of pathogen defense and leaf cell death.</text>
</comment>
<comment type="subcellular location">
    <subcellularLocation>
        <location evidence="1">Membrane</location>
        <topology evidence="1">Multi-pass membrane protein</topology>
    </subcellularLocation>
</comment>
<comment type="similarity">
    <text evidence="3">Belongs to the MLO family.</text>
</comment>
<evidence type="ECO:0000250" key="1"/>
<evidence type="ECO:0000255" key="2"/>
<evidence type="ECO:0000305" key="3"/>
<sequence>RIRARYPIIAAHLAPGSESRFDFQKYVNRSLEDDFKVVVGISPILWFFAVLFLLSNTHGWVAYLWLPFIPLIIILVVGTKLQVIITQLGLSIQDRGDVVKGAPVVQPGDDLFWFGRPRLVLFLIHFCLFQNAFQLAFFIWSVYEFGIKTCFHEKTEDIVRASGLVPNRDTSATQTTELSKGKLMMADTCLPTEDLVGMVVTAAHSGKRFFVDSIRYD</sequence>